<proteinExistence type="evidence at protein level"/>
<reference key="1">
    <citation type="journal article" date="1997" name="Biochim. Biophys. Acta">
        <title>The sequence of a cDNA encoding functional murine C1-inhibitor protein.</title>
        <authorList>
            <person name="Russell J.A."/>
            <person name="Whaley K."/>
            <person name="Heaphy S."/>
        </authorList>
    </citation>
    <scope>NUCLEOTIDE SEQUENCE [MRNA]</scope>
    <source>
        <tissue>Liver</tissue>
    </source>
</reference>
<reference key="2">
    <citation type="journal article" date="1998" name="Eur. J. Biochem.">
        <title>Molecular cloning, gene structure and expression profile of mouse C1 inhibitor.</title>
        <authorList>
            <person name="Lener M."/>
            <person name="Vinci G."/>
            <person name="Duponchel C."/>
            <person name="Meo T."/>
            <person name="Tosi M."/>
        </authorList>
    </citation>
    <scope>NUCLEOTIDE SEQUENCE [GENOMIC DNA / MRNA]</scope>
    <scope>SUBCELLULAR LOCATION</scope>
    <source>
        <strain>129/Sv</strain>
        <strain>BALB/cJ</strain>
    </source>
</reference>
<reference key="3">
    <citation type="journal article" date="2009" name="PLoS Biol.">
        <title>Lineage-specific biology revealed by a finished genome assembly of the mouse.</title>
        <authorList>
            <person name="Church D.M."/>
            <person name="Goodstadt L."/>
            <person name="Hillier L.W."/>
            <person name="Zody M.C."/>
            <person name="Goldstein S."/>
            <person name="She X."/>
            <person name="Bult C.J."/>
            <person name="Agarwala R."/>
            <person name="Cherry J.L."/>
            <person name="DiCuccio M."/>
            <person name="Hlavina W."/>
            <person name="Kapustin Y."/>
            <person name="Meric P."/>
            <person name="Maglott D."/>
            <person name="Birtle Z."/>
            <person name="Marques A.C."/>
            <person name="Graves T."/>
            <person name="Zhou S."/>
            <person name="Teague B."/>
            <person name="Potamousis K."/>
            <person name="Churas C."/>
            <person name="Place M."/>
            <person name="Herschleb J."/>
            <person name="Runnheim R."/>
            <person name="Forrest D."/>
            <person name="Amos-Landgraf J."/>
            <person name="Schwartz D.C."/>
            <person name="Cheng Z."/>
            <person name="Lindblad-Toh K."/>
            <person name="Eichler E.E."/>
            <person name="Ponting C.P."/>
        </authorList>
    </citation>
    <scope>NUCLEOTIDE SEQUENCE [LARGE SCALE GENOMIC DNA]</scope>
    <source>
        <strain>C57BL/6J</strain>
    </source>
</reference>
<reference key="4">
    <citation type="journal article" date="2004" name="Genome Res.">
        <title>The status, quality, and expansion of the NIH full-length cDNA project: the Mammalian Gene Collection (MGC).</title>
        <authorList>
            <consortium name="The MGC Project Team"/>
        </authorList>
    </citation>
    <scope>NUCLEOTIDE SEQUENCE [LARGE SCALE MRNA]</scope>
    <source>
        <tissue>Mammary tumor</tissue>
    </source>
</reference>
<reference key="5">
    <citation type="journal article" date="2006" name="J. Proteome Res.">
        <title>Proteome-wide characterization of N-glycosylation events by diagonal chromatography.</title>
        <authorList>
            <person name="Ghesquiere B."/>
            <person name="Van Damme J."/>
            <person name="Martens L."/>
            <person name="Vandekerckhove J."/>
            <person name="Gevaert K."/>
        </authorList>
    </citation>
    <scope>GLYCOSYLATION [LARGE SCALE ANALYSIS] AT ASN-243</scope>
    <source>
        <strain>C57BL/6J</strain>
        <tissue>Plasma</tissue>
    </source>
</reference>
<reference key="6">
    <citation type="journal article" date="2007" name="J. Proteome Res.">
        <title>Enhanced analysis of the mouse plasma proteome using cysteine-containing tryptic glycopeptides.</title>
        <authorList>
            <person name="Bernhard O.K."/>
            <person name="Kapp E.A."/>
            <person name="Simpson R.J."/>
        </authorList>
    </citation>
    <scope>GLYCOSYLATION [LARGE SCALE ANALYSIS] AT ASN-243</scope>
    <source>
        <strain>C57BL/6J</strain>
        <tissue>Plasma</tissue>
    </source>
</reference>
<reference key="7">
    <citation type="journal article" date="2010" name="Cell">
        <title>A tissue-specific atlas of mouse protein phosphorylation and expression.</title>
        <authorList>
            <person name="Huttlin E.L."/>
            <person name="Jedrychowski M.P."/>
            <person name="Elias J.E."/>
            <person name="Goswami T."/>
            <person name="Rad R."/>
            <person name="Beausoleil S.A."/>
            <person name="Villen J."/>
            <person name="Haas W."/>
            <person name="Sowa M.E."/>
            <person name="Gygi S.P."/>
        </authorList>
    </citation>
    <scope>IDENTIFICATION BY MASS SPECTROMETRY [LARGE SCALE ANALYSIS]</scope>
    <source>
        <tissue>Brown adipose tissue</tissue>
        <tissue>Heart</tissue>
        <tissue>Kidney</tissue>
        <tissue>Liver</tissue>
        <tissue>Lung</tissue>
        <tissue>Spleen</tissue>
        <tissue>Testis</tissue>
    </source>
</reference>
<accession>P97290</accession>
<accession>A2ATR7</accession>
<accession>O88330</accession>
<accession>Q99M43</accession>
<accession>Q9QX09</accession>
<protein>
    <recommendedName>
        <fullName>Plasma protease C1 inhibitor</fullName>
        <shortName>C1 Inh</shortName>
        <shortName>C1Inh</shortName>
    </recommendedName>
    <alternativeName>
        <fullName>C1 esterase inhibitor</fullName>
    </alternativeName>
    <alternativeName>
        <fullName>C1-inhibiting factor</fullName>
    </alternativeName>
    <alternativeName>
        <fullName>Serpin G1</fullName>
    </alternativeName>
</protein>
<dbReference type="EMBL" id="Y10386">
    <property type="protein sequence ID" value="CAA71412.1"/>
    <property type="molecule type" value="mRNA"/>
</dbReference>
<dbReference type="EMBL" id="AF010254">
    <property type="protein sequence ID" value="AAC40136.1"/>
    <property type="molecule type" value="mRNA"/>
</dbReference>
<dbReference type="EMBL" id="AF052039">
    <property type="protein sequence ID" value="AAC40149.1"/>
    <property type="molecule type" value="Genomic_DNA"/>
</dbReference>
<dbReference type="EMBL" id="AL928914">
    <property type="status" value="NOT_ANNOTATED_CDS"/>
    <property type="molecule type" value="Genomic_DNA"/>
</dbReference>
<dbReference type="EMBL" id="BC002026">
    <property type="protein sequence ID" value="AAH02026.1"/>
    <property type="molecule type" value="mRNA"/>
</dbReference>
<dbReference type="CCDS" id="CCDS16193.1"/>
<dbReference type="RefSeq" id="NP_001406956.1">
    <property type="nucleotide sequence ID" value="NM_001420027.1"/>
</dbReference>
<dbReference type="RefSeq" id="NP_001406957.1">
    <property type="nucleotide sequence ID" value="NM_001420028.1"/>
</dbReference>
<dbReference type="RefSeq" id="NP_033906.2">
    <property type="nucleotide sequence ID" value="NM_009776.4"/>
</dbReference>
<dbReference type="RefSeq" id="XP_006498686.1">
    <property type="nucleotide sequence ID" value="XM_006498623.3"/>
</dbReference>
<dbReference type="SMR" id="P97290"/>
<dbReference type="FunCoup" id="P97290">
    <property type="interactions" value="283"/>
</dbReference>
<dbReference type="STRING" id="10090.ENSMUSP00000023994"/>
<dbReference type="MEROPS" id="I04.024"/>
<dbReference type="GlyCosmos" id="P97290">
    <property type="glycosylation" value="5 sites, No reported glycans"/>
</dbReference>
<dbReference type="GlyGen" id="P97290">
    <property type="glycosylation" value="5 sites, 2 N-linked glycans (2 sites)"/>
</dbReference>
<dbReference type="iPTMnet" id="P97290"/>
<dbReference type="PhosphoSitePlus" id="P97290"/>
<dbReference type="SwissPalm" id="P97290"/>
<dbReference type="CPTAC" id="non-CPTAC-3370"/>
<dbReference type="jPOST" id="P97290"/>
<dbReference type="PaxDb" id="10090-ENSMUSP00000023994"/>
<dbReference type="PeptideAtlas" id="P97290"/>
<dbReference type="ProteomicsDB" id="267209"/>
<dbReference type="Antibodypedia" id="14214">
    <property type="antibodies" value="599 antibodies from 41 providers"/>
</dbReference>
<dbReference type="DNASU" id="12258"/>
<dbReference type="Ensembl" id="ENSMUST00000023994.10">
    <property type="protein sequence ID" value="ENSMUSP00000023994.4"/>
    <property type="gene ID" value="ENSMUSG00000023224.13"/>
</dbReference>
<dbReference type="GeneID" id="12258"/>
<dbReference type="KEGG" id="mmu:12258"/>
<dbReference type="UCSC" id="uc008kjd.2">
    <property type="organism name" value="mouse"/>
</dbReference>
<dbReference type="AGR" id="MGI:894696"/>
<dbReference type="CTD" id="710"/>
<dbReference type="MGI" id="MGI:894696">
    <property type="gene designation" value="Serping1"/>
</dbReference>
<dbReference type="VEuPathDB" id="HostDB:ENSMUSG00000023224"/>
<dbReference type="eggNOG" id="KOG2392">
    <property type="taxonomic scope" value="Eukaryota"/>
</dbReference>
<dbReference type="GeneTree" id="ENSGT00940000159681"/>
<dbReference type="HOGENOM" id="CLU_023330_3_0_1"/>
<dbReference type="InParanoid" id="P97290"/>
<dbReference type="OMA" id="FELSSCT"/>
<dbReference type="OrthoDB" id="6433428at2759"/>
<dbReference type="PhylomeDB" id="P97290"/>
<dbReference type="TreeFam" id="TF317350"/>
<dbReference type="Reactome" id="R-MMU-114608">
    <property type="pathway name" value="Platelet degranulation"/>
</dbReference>
<dbReference type="Reactome" id="R-MMU-140837">
    <property type="pathway name" value="Intrinsic Pathway of Fibrin Clot Formation"/>
</dbReference>
<dbReference type="Reactome" id="R-MMU-977606">
    <property type="pathway name" value="Regulation of Complement cascade"/>
</dbReference>
<dbReference type="BioGRID-ORCS" id="12258">
    <property type="hits" value="2 hits in 75 CRISPR screens"/>
</dbReference>
<dbReference type="ChiTaRS" id="Serping1">
    <property type="organism name" value="mouse"/>
</dbReference>
<dbReference type="PRO" id="PR:P97290"/>
<dbReference type="Proteomes" id="UP000000589">
    <property type="component" value="Chromosome 2"/>
</dbReference>
<dbReference type="RNAct" id="P97290">
    <property type="molecule type" value="protein"/>
</dbReference>
<dbReference type="Bgee" id="ENSMUSG00000023224">
    <property type="expression patterns" value="Expressed in left lobe of liver and 225 other cell types or tissues"/>
</dbReference>
<dbReference type="ExpressionAtlas" id="P97290">
    <property type="expression patterns" value="baseline and differential"/>
</dbReference>
<dbReference type="GO" id="GO:0062023">
    <property type="term" value="C:collagen-containing extracellular matrix"/>
    <property type="evidence" value="ECO:0007005"/>
    <property type="project" value="BHF-UCL"/>
</dbReference>
<dbReference type="GO" id="GO:0005615">
    <property type="term" value="C:extracellular space"/>
    <property type="evidence" value="ECO:0000314"/>
    <property type="project" value="MGI"/>
</dbReference>
<dbReference type="GO" id="GO:0004867">
    <property type="term" value="F:serine-type endopeptidase inhibitor activity"/>
    <property type="evidence" value="ECO:0000314"/>
    <property type="project" value="MGI"/>
</dbReference>
<dbReference type="GO" id="GO:0007596">
    <property type="term" value="P:blood coagulation"/>
    <property type="evidence" value="ECO:0007669"/>
    <property type="project" value="UniProtKB-KW"/>
</dbReference>
<dbReference type="GO" id="GO:0006958">
    <property type="term" value="P:complement activation, classical pathway"/>
    <property type="evidence" value="ECO:0007669"/>
    <property type="project" value="UniProtKB-KW"/>
</dbReference>
<dbReference type="GO" id="GO:0042730">
    <property type="term" value="P:fibrinolysis"/>
    <property type="evidence" value="ECO:0007669"/>
    <property type="project" value="UniProtKB-KW"/>
</dbReference>
<dbReference type="GO" id="GO:0045087">
    <property type="term" value="P:innate immune response"/>
    <property type="evidence" value="ECO:0007669"/>
    <property type="project" value="UniProtKB-KW"/>
</dbReference>
<dbReference type="GO" id="GO:0001869">
    <property type="term" value="P:negative regulation of complement activation, lectin pathway"/>
    <property type="evidence" value="ECO:0000250"/>
    <property type="project" value="UniProtKB"/>
</dbReference>
<dbReference type="CDD" id="cd02050">
    <property type="entry name" value="serpinG1_C1-INH"/>
    <property type="match status" value="1"/>
</dbReference>
<dbReference type="FunFam" id="3.30.497.10:FF:000013">
    <property type="entry name" value="Serpin family G member 1"/>
    <property type="match status" value="1"/>
</dbReference>
<dbReference type="Gene3D" id="2.30.39.10">
    <property type="entry name" value="Alpha-1-antitrypsin, domain 1"/>
    <property type="match status" value="1"/>
</dbReference>
<dbReference type="Gene3D" id="3.30.497.10">
    <property type="entry name" value="Antithrombin, subunit I, domain 2"/>
    <property type="match status" value="1"/>
</dbReference>
<dbReference type="InterPro" id="IPR023795">
    <property type="entry name" value="Serpin_CS"/>
</dbReference>
<dbReference type="InterPro" id="IPR023796">
    <property type="entry name" value="Serpin_dom"/>
</dbReference>
<dbReference type="InterPro" id="IPR000215">
    <property type="entry name" value="Serpin_fam"/>
</dbReference>
<dbReference type="InterPro" id="IPR036186">
    <property type="entry name" value="Serpin_sf"/>
</dbReference>
<dbReference type="InterPro" id="IPR042178">
    <property type="entry name" value="Serpin_sf_1"/>
</dbReference>
<dbReference type="InterPro" id="IPR042185">
    <property type="entry name" value="Serpin_sf_2"/>
</dbReference>
<dbReference type="PANTHER" id="PTHR11461:SF159">
    <property type="entry name" value="PLASMA PROTEASE C1 INHIBITOR"/>
    <property type="match status" value="1"/>
</dbReference>
<dbReference type="PANTHER" id="PTHR11461">
    <property type="entry name" value="SERINE PROTEASE INHIBITOR, SERPIN"/>
    <property type="match status" value="1"/>
</dbReference>
<dbReference type="Pfam" id="PF00079">
    <property type="entry name" value="Serpin"/>
    <property type="match status" value="1"/>
</dbReference>
<dbReference type="SMART" id="SM00093">
    <property type="entry name" value="SERPIN"/>
    <property type="match status" value="1"/>
</dbReference>
<dbReference type="SUPFAM" id="SSF56574">
    <property type="entry name" value="Serpins"/>
    <property type="match status" value="1"/>
</dbReference>
<dbReference type="PROSITE" id="PS00284">
    <property type="entry name" value="SERPIN"/>
    <property type="match status" value="1"/>
</dbReference>
<keyword id="KW-0094">Blood coagulation</keyword>
<keyword id="KW-1015">Disulfide bond</keyword>
<keyword id="KW-0280">Fibrinolysis</keyword>
<keyword id="KW-0325">Glycoprotein</keyword>
<keyword id="KW-0356">Hemostasis</keyword>
<keyword id="KW-0646">Protease inhibitor</keyword>
<keyword id="KW-1185">Reference proteome</keyword>
<keyword id="KW-0964">Secreted</keyword>
<keyword id="KW-0722">Serine protease inhibitor</keyword>
<keyword id="KW-0732">Signal</keyword>
<evidence type="ECO:0000250" key="1"/>
<evidence type="ECO:0000250" key="2">
    <source>
        <dbReference type="UniProtKB" id="P05155"/>
    </source>
</evidence>
<evidence type="ECO:0000255" key="3"/>
<evidence type="ECO:0000256" key="4">
    <source>
        <dbReference type="SAM" id="MobiDB-lite"/>
    </source>
</evidence>
<evidence type="ECO:0000269" key="5">
    <source>
    </source>
</evidence>
<evidence type="ECO:0000269" key="6">
    <source>
    </source>
</evidence>
<evidence type="ECO:0000269" key="7">
    <source>
    </source>
</evidence>
<evidence type="ECO:0000305" key="8"/>
<feature type="signal peptide" evidence="1">
    <location>
        <begin position="1"/>
        <end position="22"/>
    </location>
</feature>
<feature type="chain" id="PRO_0000032515" description="Plasma protease C1 inhibitor">
    <location>
        <begin position="23"/>
        <end position="504"/>
    </location>
</feature>
<feature type="region of interest" description="Disordered" evidence="4">
    <location>
        <begin position="22"/>
        <end position="67"/>
    </location>
</feature>
<feature type="region of interest" description="Disordered" evidence="4">
    <location>
        <begin position="85"/>
        <end position="141"/>
    </location>
</feature>
<feature type="compositionally biased region" description="Basic and acidic residues" evidence="4">
    <location>
        <begin position="39"/>
        <end position="51"/>
    </location>
</feature>
<feature type="compositionally biased region" description="Polar residues" evidence="4">
    <location>
        <begin position="85"/>
        <end position="124"/>
    </location>
</feature>
<feature type="site" description="Reactive bond" evidence="1">
    <location>
        <begin position="470"/>
        <end position="471"/>
    </location>
</feature>
<feature type="glycosylation site" description="N-linked (GlcNAc...) asparagine" evidence="3">
    <location>
        <position position="75"/>
    </location>
</feature>
<feature type="glycosylation site" description="N-linked (GlcNAc...) asparagine" evidence="3">
    <location>
        <position position="83"/>
    </location>
</feature>
<feature type="glycosylation site" description="N-linked (GlcNAc...) asparagine" evidence="3">
    <location>
        <position position="107"/>
    </location>
</feature>
<feature type="glycosylation site" description="N-linked (GlcNAc...) asparagine" evidence="5 6">
    <location>
        <position position="243"/>
    </location>
</feature>
<feature type="glycosylation site" description="N-linked (GlcNAc...) asparagine" evidence="3">
    <location>
        <position position="356"/>
    </location>
</feature>
<feature type="disulfide bond" evidence="1">
    <location>
        <begin position="128"/>
        <end position="432"/>
    </location>
</feature>
<feature type="disulfide bond" evidence="1">
    <location>
        <begin position="135"/>
        <end position="210"/>
    </location>
</feature>
<feature type="sequence conflict" description="In Ref. 2; AAC40136." evidence="8" ref="2">
    <original>C</original>
    <variation>R</variation>
    <location>
        <position position="291"/>
    </location>
</feature>
<feature type="sequence conflict" description="In Ref. 1; CAA71412." evidence="8" ref="1">
    <original>E</original>
    <variation>K</variation>
    <location>
        <position position="421"/>
    </location>
</feature>
<sequence length="504" mass="55585">MASRLTPLTLLLLLLAGDRAFSDPEATSHSTQDPLEAQAKSRESFPERDDSWSPPEPTVLPSTWPTTSVAITITNDTMGKVANESFSQHSQPAAQLPTDSPGQPPLNSSSQPSTASDLPTQATTEPFCPEPLAQCSDSDRDSSEAKLSEALTDFSVKLYHAFSATKMAKTNMAFSPFSIASLLTQVLLGAGDSTKSNLESILSYPKDFACVHQALKGFSSKGVTSVSQIFHSPDLAIRDTYVNASQSLYGSSPRVLGPDSAANLELINTWVAENTNHKIRKLLDSLPSDTCLVLLNAVYLSAKWKITFEPKKMMAPFFYKNSMIKVPMMSSVKYPVAQFDDHTLKAKVGQLQLSHNLSFVIVVPVFPKHQLKDVEKALNPTVFKAIMKKLELSKFLPTYLTMPHIKVKSSQDMLSVMEKLEFFDFTYDLNLCGLTEDPDLQVSAMKHETVLELTESGVEAAAASAISFGRSLPIFEVQRPFLFLLWDQQHRFPVFMGRVYDPRG</sequence>
<name>IC1_MOUSE</name>
<comment type="function">
    <text evidence="2">Serine protease inhibitor, which acrs as a regulator of the classical complement pathway. Forms a proteolytically inactive stoichiometric complex with the C1r or C1s proteases. May also regulate blood coagulation, fibrinolysis and the generation of kinins. Very efficient inhibitor of FXIIa. Inhibits chymotrypsin and kallikrein.</text>
</comment>
<comment type="subunit">
    <text evidence="2">Interacts with MASP1.</text>
</comment>
<comment type="subcellular location">
    <subcellularLocation>
        <location evidence="7">Secreted</location>
    </subcellularLocation>
</comment>
<comment type="similarity">
    <text evidence="8">Belongs to the serpin family.</text>
</comment>
<organism>
    <name type="scientific">Mus musculus</name>
    <name type="common">Mouse</name>
    <dbReference type="NCBI Taxonomy" id="10090"/>
    <lineage>
        <taxon>Eukaryota</taxon>
        <taxon>Metazoa</taxon>
        <taxon>Chordata</taxon>
        <taxon>Craniata</taxon>
        <taxon>Vertebrata</taxon>
        <taxon>Euteleostomi</taxon>
        <taxon>Mammalia</taxon>
        <taxon>Eutheria</taxon>
        <taxon>Euarchontoglires</taxon>
        <taxon>Glires</taxon>
        <taxon>Rodentia</taxon>
        <taxon>Myomorpha</taxon>
        <taxon>Muroidea</taxon>
        <taxon>Muridae</taxon>
        <taxon>Murinae</taxon>
        <taxon>Mus</taxon>
        <taxon>Mus</taxon>
    </lineage>
</organism>
<gene>
    <name type="primary">Serping1</name>
    <name type="synonym">C1nh</name>
</gene>